<feature type="signal peptide" evidence="5">
    <location>
        <begin position="1"/>
        <end position="24"/>
    </location>
</feature>
<feature type="peptide" id="PRO_0000015879" description="Insulin B chain">
    <location>
        <begin position="25"/>
        <end position="54"/>
    </location>
</feature>
<feature type="propeptide" id="PRO_0000015880" description="C peptide">
    <location>
        <begin position="57"/>
        <end position="85"/>
    </location>
</feature>
<feature type="peptide" id="PRO_0000015881" description="Insulin A chain">
    <location>
        <begin position="88"/>
        <end position="108"/>
    </location>
</feature>
<feature type="disulfide bond" description="Interchain (between B and A chains)" evidence="2 3 4 7 8 9">
    <location>
        <begin position="31"/>
        <end position="94"/>
    </location>
</feature>
<feature type="disulfide bond" description="Interchain (between B and A chains)" evidence="2 3 4 7 8 9">
    <location>
        <begin position="43"/>
        <end position="107"/>
    </location>
</feature>
<feature type="disulfide bond" evidence="2 3 4 7 8 9">
    <location>
        <begin position="93"/>
        <end position="98"/>
    </location>
</feature>
<feature type="helix" evidence="10">
    <location>
        <begin position="33"/>
        <end position="43"/>
    </location>
</feature>
<feature type="helix" evidence="10">
    <location>
        <begin position="44"/>
        <end position="46"/>
    </location>
</feature>
<feature type="strand" evidence="10">
    <location>
        <begin position="48"/>
        <end position="50"/>
    </location>
</feature>
<feature type="helix" evidence="10">
    <location>
        <begin position="89"/>
        <end position="95"/>
    </location>
</feature>
<feature type="helix" evidence="10">
    <location>
        <begin position="100"/>
        <end position="103"/>
    </location>
</feature>
<feature type="helix" evidence="10">
    <location>
        <begin position="104"/>
        <end position="106"/>
    </location>
</feature>
<reference key="1">
    <citation type="submission" date="1998-05" db="EMBL/GenBank/DDBJ databases">
        <title>Complete porcine preproinsulin cDNA sequence.</title>
        <authorList>
            <person name="Han X.G."/>
            <person name="Tuch B.E."/>
        </authorList>
    </citation>
    <scope>NUCLEOTIDE SEQUENCE</scope>
</reference>
<reference key="2">
    <citation type="journal article" date="2002" name="Mamm. Genome">
        <title>Comparative sequence analysis of the INS-IGF2-H19 gene cluster in pigs.</title>
        <authorList>
            <person name="Amarger V."/>
            <person name="Nguyen M."/>
            <person name="Van Laere A.-S."/>
            <person name="Braunschweig M."/>
            <person name="Nezer C."/>
            <person name="Georges M."/>
            <person name="Andersson L."/>
        </authorList>
    </citation>
    <scope>NUCLEOTIDE SEQUENCE [GENOMIC DNA]</scope>
    <source>
        <strain>Large white</strain>
    </source>
</reference>
<reference key="3">
    <citation type="journal article" date="2003" name="Nature">
        <title>A regulatory mutation in IGF2 causes a major QTL effect on muscle growth in the pig.</title>
        <authorList>
            <person name="Van Laere A.-S."/>
            <person name="Nguyen M."/>
            <person name="Braunschweig M."/>
            <person name="Nezer C."/>
            <person name="Collette C."/>
            <person name="Moreau L."/>
            <person name="Archibald A.L."/>
            <person name="Haley C."/>
            <person name="Buys N."/>
            <person name="Tally M."/>
            <person name="Andersson G."/>
            <person name="Georges M."/>
            <person name="Andersson L."/>
        </authorList>
    </citation>
    <scope>NUCLEOTIDE SEQUENCE [GENOMIC DNA]</scope>
    <source>
        <strain>European wild boar</strain>
        <strain>Hampshire</strain>
        <strain>Japanese wild boar</strain>
        <strain>Landrace</strain>
        <strain>Large white</strain>
        <strain>Meishan</strain>
        <strain>Pietrain</strain>
    </source>
</reference>
<reference key="4">
    <citation type="journal article" date="1968" name="Science">
        <title>Porcine proinsulin: characterization and amino acid sequence.</title>
        <authorList>
            <person name="Chance R.E."/>
            <person name="Ellis R.M."/>
            <person name="Bromer W.W."/>
        </authorList>
    </citation>
    <scope>PROTEIN SEQUENCE OF 25-108</scope>
</reference>
<reference key="5">
    <citation type="submission" date="1970-07" db="PIR data bank">
        <authorList>
            <person name="Chance R.E."/>
        </authorList>
    </citation>
    <scope>SEQUENCE REVISION TO 59</scope>
</reference>
<reference key="6">
    <citation type="journal article" date="1972" name="Adv. Protein Chem.">
        <title>Insulin. The structure in the crystal and its reflection in chemistry and biology.</title>
        <authorList>
            <person name="Blundell T.L."/>
            <person name="Dodson G.G."/>
            <person name="Hodgkin D."/>
            <person name="Mercola D."/>
        </authorList>
    </citation>
    <scope>X-RAY CRYSTALLOGRAPHY (1.9 ANGSTROMS)</scope>
</reference>
<reference key="7">
    <citation type="journal article" date="1978" name="Acta Crystallogr. A">
        <title>Experience with fast Fourier least squares in the refinement of the crystal structure of rhombohedral 2-zinc insulin at 1.5-A resolution.</title>
        <authorList>
            <person name="Isaacs N.W."/>
            <person name="Agarwal R.C."/>
        </authorList>
    </citation>
    <scope>X-RAY CRYSTALLOGRAPHY (1.50 ANGSTROMS) OF 88-108 AND 25-54</scope>
    <scope>DISULFIDE BONDS</scope>
</reference>
<reference key="8">
    <citation type="journal article" date="1988" name="Philos. Trans. R. Soc. Lond., B, Biol. Sci.">
        <title>The structure of 2Zn pig insulin crystals at 1.5-A resolution.</title>
        <authorList>
            <person name="Baker E.N."/>
            <person name="Blundell T.L."/>
            <person name="Cutfield J.F."/>
            <person name="Cutfield S.M."/>
            <person name="Dodson E.J."/>
            <person name="Dodson G.G."/>
            <person name="Crowfoot Hodgkin D.M."/>
            <person name="Hubbard R.E."/>
            <person name="Isaacs N.W."/>
            <person name="Reynolds C.D."/>
            <person name="Sakabe K."/>
            <person name="Sakabe N."/>
            <person name="Vijayan N.M."/>
        </authorList>
    </citation>
    <scope>X-RAY CRYSTALLOGRAPHY (1.5 ANGSTROMS)</scope>
</reference>
<reference key="9">
    <citation type="journal article" date="1991" name="Acta Crystallogr. B">
        <title>Structure of porcine insulin cocrystallized with clupeine Z.</title>
        <authorList>
            <person name="Balschmidt P."/>
            <person name="Hansen F.B."/>
            <person name="Dodson E."/>
            <person name="Dodson G."/>
            <person name="Korber F."/>
        </authorList>
    </citation>
    <scope>X-RAY CRYSTALLOGRAPHY (2.00 ANGSTROMS) OF 88-108 AND 25-54</scope>
    <scope>DISULFIDE BONDS</scope>
</reference>
<reference key="10">
    <citation type="journal article" date="1991" name="Acta Crystallogr. B">
        <title>Structure of the pig insulin dimer in the cubic crystal.</title>
        <authorList>
            <person name="Badger J."/>
            <person name="Harris M.R."/>
            <person name="Reynolds C.D."/>
            <person name="Evans A.C."/>
            <person name="Dodson E.J."/>
            <person name="Dodson G.G."/>
            <person name="North A.C.T."/>
        </authorList>
    </citation>
    <scope>X-RAY CRYSTALLOGRAPHY (1.7 ANGSTROMS)</scope>
</reference>
<reference key="11">
    <citation type="journal article" date="1997" name="Acta Crystallogr. D">
        <title>Structure of monomeric porcine DesB1-B2 despentapeptide (B26-B30) insulin at 1.65-A resolution.</title>
        <authorList>
            <person name="Diao J.-S."/>
            <person name="Wan Z.-L."/>
            <person name="Chang W.-R."/>
            <person name="Liang D.-C."/>
        </authorList>
    </citation>
    <scope>X-RAY CRYSTALLOGRAPHY (1.65 ANGSTROMS) OF 88-108 AND 27-49</scope>
    <scope>DISULFIDE BONDS</scope>
</reference>
<name>INS_PIG</name>
<evidence type="ECO:0000250" key="1">
    <source>
        <dbReference type="UniProtKB" id="P01308"/>
    </source>
</evidence>
<evidence type="ECO:0000269" key="2">
    <source>
    </source>
</evidence>
<evidence type="ECO:0000269" key="3">
    <source>
    </source>
</evidence>
<evidence type="ECO:0000269" key="4">
    <source>
    </source>
</evidence>
<evidence type="ECO:0000269" key="5">
    <source>
    </source>
</evidence>
<evidence type="ECO:0000305" key="6"/>
<evidence type="ECO:0007744" key="7">
    <source>
        <dbReference type="PDB" id="1SDB"/>
    </source>
</evidence>
<evidence type="ECO:0007744" key="8">
    <source>
        <dbReference type="PDB" id="4INS"/>
    </source>
</evidence>
<evidence type="ECO:0007744" key="9">
    <source>
        <dbReference type="PDB" id="7INS"/>
    </source>
</evidence>
<evidence type="ECO:0007829" key="10">
    <source>
        <dbReference type="PDB" id="1M5A"/>
    </source>
</evidence>
<accession>P01315</accession>
<accession>Q9TSJ5</accession>
<keyword id="KW-0002">3D-structure</keyword>
<keyword id="KW-0119">Carbohydrate metabolism</keyword>
<keyword id="KW-0165">Cleavage on pair of basic residues</keyword>
<keyword id="KW-0903">Direct protein sequencing</keyword>
<keyword id="KW-1015">Disulfide bond</keyword>
<keyword id="KW-0313">Glucose metabolism</keyword>
<keyword id="KW-0372">Hormone</keyword>
<keyword id="KW-1185">Reference proteome</keyword>
<keyword id="KW-0964">Secreted</keyword>
<keyword id="KW-0732">Signal</keyword>
<comment type="function">
    <text>Insulin decreases blood glucose concentration. It increases cell permeability to monosaccharides, amino acids and fatty acids. It accelerates glycolysis, the pentose phosphate cycle, and glycogen synthesis in liver.</text>
</comment>
<comment type="subunit">
    <text evidence="1">Heterodimer of a B chain and an A chain linked by two disulfide bonds.</text>
</comment>
<comment type="interaction">
    <interactant intactId="EBI-8437944">
        <id>P01315</id>
    </interactant>
    <interactant intactId="EBI-8437944">
        <id>P01315</id>
        <label>INS</label>
    </interactant>
    <organismsDiffer>false</organismsDiffer>
    <experiments>2</experiments>
</comment>
<comment type="subcellular location">
    <subcellularLocation>
        <location>Secreted</location>
    </subcellularLocation>
</comment>
<comment type="similarity">
    <text evidence="6">Belongs to the insulin family.</text>
</comment>
<comment type="sequence caution" evidence="6">
    <conflict type="erroneous initiation">
        <sequence resource="EMBL-CDS" id="AAC77920"/>
    </conflict>
</comment>
<comment type="online information" name="Protein Spotlight">
    <link uri="https://www.proteinspotlight.org/back_issues/009"/>
    <text>Protein of the 20th century - Issue 9 of April 2001</text>
</comment>
<organism>
    <name type="scientific">Sus scrofa</name>
    <name type="common">Pig</name>
    <dbReference type="NCBI Taxonomy" id="9823"/>
    <lineage>
        <taxon>Eukaryota</taxon>
        <taxon>Metazoa</taxon>
        <taxon>Chordata</taxon>
        <taxon>Craniata</taxon>
        <taxon>Vertebrata</taxon>
        <taxon>Euteleostomi</taxon>
        <taxon>Mammalia</taxon>
        <taxon>Eutheria</taxon>
        <taxon>Laurasiatheria</taxon>
        <taxon>Artiodactyla</taxon>
        <taxon>Suina</taxon>
        <taxon>Suidae</taxon>
        <taxon>Sus</taxon>
    </lineage>
</organism>
<protein>
    <recommendedName>
        <fullName>Insulin</fullName>
    </recommendedName>
    <component>
        <recommendedName>
            <fullName>Insulin B chain</fullName>
        </recommendedName>
    </component>
    <component>
        <recommendedName>
            <fullName>Insulin A chain</fullName>
        </recommendedName>
    </component>
</protein>
<proteinExistence type="evidence at protein level"/>
<gene>
    <name type="primary">INS</name>
</gene>
<dbReference type="EMBL" id="AF064555">
    <property type="protein sequence ID" value="AAC77920.1"/>
    <property type="status" value="ALT_INIT"/>
    <property type="molecule type" value="mRNA"/>
</dbReference>
<dbReference type="EMBL" id="AY044828">
    <property type="protein sequence ID" value="AAL69550.1"/>
    <property type="molecule type" value="Genomic_DNA"/>
</dbReference>
<dbReference type="EMBL" id="AY242098">
    <property type="protein sequence ID" value="AAQ00952.1"/>
    <property type="molecule type" value="Genomic_DNA"/>
</dbReference>
<dbReference type="EMBL" id="AY242099">
    <property type="protein sequence ID" value="AAQ00954.1"/>
    <property type="molecule type" value="Genomic_DNA"/>
</dbReference>
<dbReference type="EMBL" id="AY242100">
    <property type="protein sequence ID" value="AAQ00957.1"/>
    <property type="molecule type" value="Genomic_DNA"/>
</dbReference>
<dbReference type="EMBL" id="AY242101">
    <property type="protein sequence ID" value="AAQ00960.1"/>
    <property type="molecule type" value="Genomic_DNA"/>
</dbReference>
<dbReference type="EMBL" id="AY242102">
    <property type="protein sequence ID" value="AAQ00963.1"/>
    <property type="molecule type" value="Genomic_DNA"/>
</dbReference>
<dbReference type="EMBL" id="AY242103">
    <property type="protein sequence ID" value="AAQ00966.1"/>
    <property type="molecule type" value="Genomic_DNA"/>
</dbReference>
<dbReference type="EMBL" id="AY242104">
    <property type="protein sequence ID" value="AAQ00969.1"/>
    <property type="molecule type" value="Genomic_DNA"/>
</dbReference>
<dbReference type="EMBL" id="AY242105">
    <property type="protein sequence ID" value="AAQ00972.1"/>
    <property type="molecule type" value="Genomic_DNA"/>
</dbReference>
<dbReference type="EMBL" id="AY242106">
    <property type="protein sequence ID" value="AAQ00975.1"/>
    <property type="molecule type" value="Genomic_DNA"/>
</dbReference>
<dbReference type="EMBL" id="AY242107">
    <property type="protein sequence ID" value="AAQ00978.1"/>
    <property type="molecule type" value="Genomic_DNA"/>
</dbReference>
<dbReference type="EMBL" id="AY242108">
    <property type="protein sequence ID" value="AAQ00981.1"/>
    <property type="molecule type" value="Genomic_DNA"/>
</dbReference>
<dbReference type="EMBL" id="AY242109">
    <property type="protein sequence ID" value="AAQ00983.1"/>
    <property type="molecule type" value="Genomic_DNA"/>
</dbReference>
<dbReference type="EMBL" id="AY242110">
    <property type="protein sequence ID" value="AAQ00985.1"/>
    <property type="molecule type" value="Genomic_DNA"/>
</dbReference>
<dbReference type="EMBL" id="AY242111">
    <property type="protein sequence ID" value="AAQ00987.1"/>
    <property type="molecule type" value="Genomic_DNA"/>
</dbReference>
<dbReference type="EMBL" id="AY242112">
    <property type="protein sequence ID" value="AAQ00990.1"/>
    <property type="molecule type" value="Genomic_DNA"/>
</dbReference>
<dbReference type="PIR" id="A01583">
    <property type="entry name" value="IPPG"/>
</dbReference>
<dbReference type="RefSeq" id="NP_001103242.1">
    <property type="nucleotide sequence ID" value="NM_001109772.2"/>
</dbReference>
<dbReference type="PDB" id="1B17">
    <property type="method" value="X-ray"/>
    <property type="resolution" value="1.70 A"/>
    <property type="chains" value="A=88-108, B=25-54"/>
</dbReference>
<dbReference type="PDB" id="1B18">
    <property type="method" value="X-ray"/>
    <property type="resolution" value="1.80 A"/>
    <property type="chains" value="A=88-108, B=25-54"/>
</dbReference>
<dbReference type="PDB" id="1B19">
    <property type="method" value="X-ray"/>
    <property type="resolution" value="1.80 A"/>
    <property type="chains" value="A=88-108, B=25-54"/>
</dbReference>
<dbReference type="PDB" id="1B2A">
    <property type="method" value="X-ray"/>
    <property type="resolution" value="1.70 A"/>
    <property type="chains" value="A=88-108, B=25-54"/>
</dbReference>
<dbReference type="PDB" id="1B2B">
    <property type="method" value="X-ray"/>
    <property type="resolution" value="1.80 A"/>
    <property type="chains" value="A=88-108, B=25-54"/>
</dbReference>
<dbReference type="PDB" id="1B2C">
    <property type="method" value="X-ray"/>
    <property type="resolution" value="1.80 A"/>
    <property type="chains" value="A=88-108, B=25-54"/>
</dbReference>
<dbReference type="PDB" id="1B2D">
    <property type="method" value="X-ray"/>
    <property type="resolution" value="1.70 A"/>
    <property type="chains" value="A=88-108, B=25-54"/>
</dbReference>
<dbReference type="PDB" id="1B2E">
    <property type="method" value="X-ray"/>
    <property type="resolution" value="1.90 A"/>
    <property type="chains" value="A=88-108, B=25-54"/>
</dbReference>
<dbReference type="PDB" id="1B2F">
    <property type="method" value="X-ray"/>
    <property type="resolution" value="1.90 A"/>
    <property type="chains" value="A=88-108, B=25-54"/>
</dbReference>
<dbReference type="PDB" id="1B2G">
    <property type="method" value="X-ray"/>
    <property type="resolution" value="1.80 A"/>
    <property type="chains" value="A=88-108, B=25-54"/>
</dbReference>
<dbReference type="PDB" id="1DEI">
    <property type="method" value="X-ray"/>
    <property type="resolution" value="1.60 A"/>
    <property type="chains" value="A/C=88-108, B/D=25-47"/>
</dbReference>
<dbReference type="PDB" id="1IZA">
    <property type="method" value="X-ray"/>
    <property type="resolution" value="2.50 A"/>
    <property type="chains" value="A/C=88-108, B/D=25-53"/>
</dbReference>
<dbReference type="PDB" id="1IZB">
    <property type="method" value="X-ray"/>
    <property type="resolution" value="2.00 A"/>
    <property type="chains" value="A/C=88-108, B/D=25-53"/>
</dbReference>
<dbReference type="PDB" id="1M5A">
    <property type="method" value="X-ray"/>
    <property type="resolution" value="1.20 A"/>
    <property type="chains" value="A/C=88-108, B/D=25-54"/>
</dbReference>
<dbReference type="PDB" id="1MPJ">
    <property type="method" value="X-ray"/>
    <property type="resolution" value="2.30 A"/>
    <property type="chains" value="A/C=88-108, B/D=25-54"/>
</dbReference>
<dbReference type="PDB" id="1SDB">
    <property type="method" value="X-ray"/>
    <property type="resolution" value="1.65 A"/>
    <property type="chains" value="A=88-108, B=27-49"/>
</dbReference>
<dbReference type="PDB" id="1WAV">
    <property type="method" value="X-ray"/>
    <property type="resolution" value="2.50 A"/>
    <property type="chains" value="A/C/E/G/I/K=88-108, B/D/F/H/J/L=25-54"/>
</dbReference>
<dbReference type="PDB" id="1ZEI">
    <property type="method" value="X-ray"/>
    <property type="resolution" value="1.90 A"/>
    <property type="chains" value="A/B/C/D/E/F=25-54, A/B/C/D/E/F=88-108"/>
</dbReference>
<dbReference type="PDB" id="1ZNI">
    <property type="method" value="X-ray"/>
    <property type="resolution" value="1.50 A"/>
    <property type="chains" value="A/C=88-108, B/D=25-54"/>
</dbReference>
<dbReference type="PDB" id="2EFA">
    <property type="method" value="Neutron"/>
    <property type="resolution" value="2.70 A"/>
    <property type="chains" value="A=88-108, B=25-54"/>
</dbReference>
<dbReference type="PDB" id="2G4M">
    <property type="method" value="X-ray"/>
    <property type="resolution" value="1.80 A"/>
    <property type="chains" value="A=88-108, B=25-54"/>
</dbReference>
<dbReference type="PDB" id="2TCI">
    <property type="method" value="X-ray"/>
    <property type="resolution" value="1.80 A"/>
    <property type="chains" value="A/C=88-108, B/D=25-54"/>
</dbReference>
<dbReference type="PDB" id="2ZPP">
    <property type="method" value="Neutron"/>
    <property type="resolution" value="2.50 A"/>
    <property type="chains" value="A=88-108, B=25-54"/>
</dbReference>
<dbReference type="PDB" id="3FHP">
    <property type="method" value="Neutron"/>
    <property type="resolution" value="2.00 A"/>
    <property type="chains" value="A/C=88-108, B/D=25-54"/>
</dbReference>
<dbReference type="PDB" id="3GKY">
    <property type="method" value="X-ray"/>
    <property type="resolution" value="1.80 A"/>
    <property type="chains" value="A/C=88-108, B/D=25-54"/>
</dbReference>
<dbReference type="PDB" id="3INS">
    <property type="method" value="X-ray"/>
    <property type="resolution" value="1.50 A"/>
    <property type="chains" value="A/C=88-108, B/D=25-54"/>
</dbReference>
<dbReference type="PDB" id="3MTH">
    <property type="method" value="X-ray"/>
    <property type="resolution" value="1.90 A"/>
    <property type="chains" value="A/C=88-108, B/D=25-54"/>
</dbReference>
<dbReference type="PDB" id="3RTO">
    <property type="method" value="X-ray"/>
    <property type="resolution" value="1.80 A"/>
    <property type="chains" value="A/C=88-108, B/D=25-54"/>
</dbReference>
<dbReference type="PDB" id="3T2A">
    <property type="method" value="X-ray"/>
    <property type="resolution" value="2.10 A"/>
    <property type="chains" value="A=88-108, B=25-54"/>
</dbReference>
<dbReference type="PDB" id="4A7E">
    <property type="method" value="X-ray"/>
    <property type="resolution" value="1.86 A"/>
    <property type="chains" value="A=88-108, B=25-54"/>
</dbReference>
<dbReference type="PDB" id="4INS">
    <property type="method" value="X-ray"/>
    <property type="resolution" value="1.50 A"/>
    <property type="chains" value="A/C=88-108, B/D=25-54"/>
</dbReference>
<dbReference type="PDB" id="5D52">
    <property type="method" value="X-ray"/>
    <property type="resolution" value="1.80 A"/>
    <property type="chains" value="A=88-108, B=25-54"/>
</dbReference>
<dbReference type="PDB" id="5D53">
    <property type="method" value="X-ray"/>
    <property type="resolution" value="1.50 A"/>
    <property type="chains" value="A=88-108, B=25-54"/>
</dbReference>
<dbReference type="PDB" id="5D54">
    <property type="method" value="X-ray"/>
    <property type="resolution" value="1.50 A"/>
    <property type="chains" value="A=88-108, B=25-54"/>
</dbReference>
<dbReference type="PDB" id="5D5E">
    <property type="method" value="X-ray"/>
    <property type="resolution" value="2.41 A"/>
    <property type="chains" value="A=88-108, B=25-54"/>
</dbReference>
<dbReference type="PDB" id="5FB6">
    <property type="method" value="X-ray"/>
    <property type="resolution" value="1.90 A"/>
    <property type="chains" value="A=88-108, B=25-54"/>
</dbReference>
<dbReference type="PDB" id="5LIS">
    <property type="method" value="X-ray"/>
    <property type="resolution" value="2.29 A"/>
    <property type="chains" value="A=88-108, B=25-54"/>
</dbReference>
<dbReference type="PDB" id="6INS">
    <property type="method" value="X-ray"/>
    <property type="resolution" value="2.00 A"/>
    <property type="chains" value="E/F=25-108"/>
</dbReference>
<dbReference type="PDB" id="6Z7Z">
    <property type="method" value="X-ray"/>
    <property type="resolution" value="2.40 A"/>
    <property type="chains" value="E/G=88-108, F/H=25-54"/>
</dbReference>
<dbReference type="PDB" id="7AC4">
    <property type="method" value="X-ray"/>
    <property type="resolution" value="1.46 A"/>
    <property type="chains" value="A=88-108, B=25-54"/>
</dbReference>
<dbReference type="PDB" id="7INS">
    <property type="method" value="X-ray"/>
    <property type="resolution" value="2.00 A"/>
    <property type="chains" value="A/C/E=88-108, B/D/F=25-54"/>
</dbReference>
<dbReference type="PDB" id="9INS">
    <property type="method" value="X-ray"/>
    <property type="resolution" value="1.70 A"/>
    <property type="chains" value="A=88-108, B=25-54"/>
</dbReference>
<dbReference type="PDBsum" id="1B17"/>
<dbReference type="PDBsum" id="1B18"/>
<dbReference type="PDBsum" id="1B19"/>
<dbReference type="PDBsum" id="1B2A"/>
<dbReference type="PDBsum" id="1B2B"/>
<dbReference type="PDBsum" id="1B2C"/>
<dbReference type="PDBsum" id="1B2D"/>
<dbReference type="PDBsum" id="1B2E"/>
<dbReference type="PDBsum" id="1B2F"/>
<dbReference type="PDBsum" id="1B2G"/>
<dbReference type="PDBsum" id="1DEI"/>
<dbReference type="PDBsum" id="1IZA"/>
<dbReference type="PDBsum" id="1IZB"/>
<dbReference type="PDBsum" id="1M5A"/>
<dbReference type="PDBsum" id="1MPJ"/>
<dbReference type="PDBsum" id="1SDB"/>
<dbReference type="PDBsum" id="1WAV"/>
<dbReference type="PDBsum" id="1ZEI"/>
<dbReference type="PDBsum" id="1ZNI"/>
<dbReference type="PDBsum" id="2EFA"/>
<dbReference type="PDBsum" id="2G4M"/>
<dbReference type="PDBsum" id="2TCI"/>
<dbReference type="PDBsum" id="2ZPP"/>
<dbReference type="PDBsum" id="3FHP"/>
<dbReference type="PDBsum" id="3GKY"/>
<dbReference type="PDBsum" id="3INS"/>
<dbReference type="PDBsum" id="3MTH"/>
<dbReference type="PDBsum" id="3RTO"/>
<dbReference type="PDBsum" id="3T2A"/>
<dbReference type="PDBsum" id="4A7E"/>
<dbReference type="PDBsum" id="4INS"/>
<dbReference type="PDBsum" id="5D52"/>
<dbReference type="PDBsum" id="5D53"/>
<dbReference type="PDBsum" id="5D54"/>
<dbReference type="PDBsum" id="5D5E"/>
<dbReference type="PDBsum" id="5FB6"/>
<dbReference type="PDBsum" id="5LIS"/>
<dbReference type="PDBsum" id="6INS"/>
<dbReference type="PDBsum" id="6Z7Z"/>
<dbReference type="PDBsum" id="7AC4"/>
<dbReference type="PDBsum" id="7INS"/>
<dbReference type="PDBsum" id="9INS"/>
<dbReference type="BMRB" id="P01315"/>
<dbReference type="SASBDB" id="P01315"/>
<dbReference type="SMR" id="P01315"/>
<dbReference type="FunCoup" id="P01315">
    <property type="interactions" value="444"/>
</dbReference>
<dbReference type="IntAct" id="P01315">
    <property type="interactions" value="1"/>
</dbReference>
<dbReference type="MINT" id="P01315"/>
<dbReference type="STRING" id="9823.ENSSSCP00000044635"/>
<dbReference type="Allergome" id="2122">
    <property type="allergen name" value="Sus s Insulin"/>
</dbReference>
<dbReference type="PaxDb" id="9823-ENSSSCP00000025428"/>
<dbReference type="Ensembl" id="ENSSSCT00000064136.1">
    <property type="protein sequence ID" value="ENSSSCP00000044635.1"/>
    <property type="gene ID" value="ENSSSCG00000033740.1"/>
</dbReference>
<dbReference type="Ensembl" id="ENSSSCT00015005290.1">
    <property type="protein sequence ID" value="ENSSSCP00015002060.1"/>
    <property type="gene ID" value="ENSSSCG00015004005.1"/>
</dbReference>
<dbReference type="Ensembl" id="ENSSSCT00025032226.1">
    <property type="protein sequence ID" value="ENSSSCP00025013482.1"/>
    <property type="gene ID" value="ENSSSCG00025023773.1"/>
</dbReference>
<dbReference type="Ensembl" id="ENSSSCT00030103634.1">
    <property type="protein sequence ID" value="ENSSSCP00030047908.1"/>
    <property type="gene ID" value="ENSSSCG00030073948.1"/>
</dbReference>
<dbReference type="Ensembl" id="ENSSSCT00035025488.1">
    <property type="protein sequence ID" value="ENSSSCP00035009642.1"/>
    <property type="gene ID" value="ENSSSCG00035019667.1"/>
</dbReference>
<dbReference type="Ensembl" id="ENSSSCT00040023180.1">
    <property type="protein sequence ID" value="ENSSSCP00040009750.1"/>
    <property type="gene ID" value="ENSSSCG00040017207.1"/>
</dbReference>
<dbReference type="Ensembl" id="ENSSSCT00045008618.1">
    <property type="protein sequence ID" value="ENSSSCP00045005838.1"/>
    <property type="gene ID" value="ENSSSCG00045005189.1"/>
</dbReference>
<dbReference type="Ensembl" id="ENSSSCT00050011348.1">
    <property type="protein sequence ID" value="ENSSSCP00050004834.1"/>
    <property type="gene ID" value="ENSSSCG00050008342.1"/>
</dbReference>
<dbReference type="Ensembl" id="ENSSSCT00055032104.1">
    <property type="protein sequence ID" value="ENSSSCP00055025559.1"/>
    <property type="gene ID" value="ENSSSCG00055016292.1"/>
</dbReference>
<dbReference type="Ensembl" id="ENSSSCT00060047539.1">
    <property type="protein sequence ID" value="ENSSSCP00060020355.1"/>
    <property type="gene ID" value="ENSSSCG00060035069.1"/>
</dbReference>
<dbReference type="Ensembl" id="ENSSSCT00065087685.1">
    <property type="protein sequence ID" value="ENSSSCP00065038365.1"/>
    <property type="gene ID" value="ENSSSCG00065063887.1"/>
</dbReference>
<dbReference type="Ensembl" id="ENSSSCT00070029958.1">
    <property type="protein sequence ID" value="ENSSSCP00070024989.1"/>
    <property type="gene ID" value="ENSSSCG00070015252.1"/>
</dbReference>
<dbReference type="Ensembl" id="ENSSSCT00085030079">
    <property type="protein sequence ID" value="ENSSSCP00085020784"/>
    <property type="gene ID" value="ENSSSCG00085015820"/>
</dbReference>
<dbReference type="Ensembl" id="ENSSSCT00105048549">
    <property type="protein sequence ID" value="ENSSSCP00105034062"/>
    <property type="gene ID" value="ENSSSCG00105025599"/>
</dbReference>
<dbReference type="Ensembl" id="ENSSSCT00110058560">
    <property type="protein sequence ID" value="ENSSSCP00110040804"/>
    <property type="gene ID" value="ENSSSCG00110030659"/>
</dbReference>
<dbReference type="Ensembl" id="ENSSSCT00115018492">
    <property type="protein sequence ID" value="ENSSSCP00115017471"/>
    <property type="gene ID" value="ENSSSCG00115010735"/>
</dbReference>
<dbReference type="Ensembl" id="ENSSSCT00130075157">
    <property type="protein sequence ID" value="ENSSSCP00130054103"/>
    <property type="gene ID" value="ENSSSCG00130038541"/>
</dbReference>
<dbReference type="GeneID" id="397415"/>
<dbReference type="KEGG" id="ssc:397415"/>
<dbReference type="CTD" id="3630"/>
<dbReference type="VGNC" id="VGNC:99778">
    <property type="gene designation" value="INS"/>
</dbReference>
<dbReference type="eggNOG" id="ENOG502S5P5">
    <property type="taxonomic scope" value="Eukaryota"/>
</dbReference>
<dbReference type="GeneTree" id="ENSGT00390000015440"/>
<dbReference type="InParanoid" id="P01315"/>
<dbReference type="OMA" id="PNRAHKR"/>
<dbReference type="OrthoDB" id="10019596at2759"/>
<dbReference type="Reactome" id="R-SSC-264876">
    <property type="pathway name" value="Insulin processing"/>
</dbReference>
<dbReference type="Reactome" id="R-SSC-422085">
    <property type="pathway name" value="Synthesis, secretion, and deacylation of Ghrelin"/>
</dbReference>
<dbReference type="Reactome" id="R-SSC-6807878">
    <property type="pathway name" value="COPI-mediated anterograde transport"/>
</dbReference>
<dbReference type="Reactome" id="R-SSC-6811558">
    <property type="pathway name" value="PI5P, PP2A and IER3 Regulate PI3K/AKT Signaling"/>
</dbReference>
<dbReference type="Reactome" id="R-SSC-74713">
    <property type="pathway name" value="IRS activation"/>
</dbReference>
<dbReference type="Reactome" id="R-SSC-74749">
    <property type="pathway name" value="Signal attenuation"/>
</dbReference>
<dbReference type="Reactome" id="R-SSC-74751">
    <property type="pathway name" value="Insulin receptor signalling cascade"/>
</dbReference>
<dbReference type="Reactome" id="R-SSC-74752">
    <property type="pathway name" value="Signaling by Insulin receptor"/>
</dbReference>
<dbReference type="Reactome" id="R-SSC-77387">
    <property type="pathway name" value="Insulin receptor recycling"/>
</dbReference>
<dbReference type="EvolutionaryTrace" id="P01315"/>
<dbReference type="Proteomes" id="UP000008227">
    <property type="component" value="Chromosome 2"/>
</dbReference>
<dbReference type="Proteomes" id="UP000314985">
    <property type="component" value="Unassembled WGS sequence"/>
</dbReference>
<dbReference type="Proteomes" id="UP000694570">
    <property type="component" value="Unplaced"/>
</dbReference>
<dbReference type="Proteomes" id="UP000694571">
    <property type="component" value="Unplaced"/>
</dbReference>
<dbReference type="Proteomes" id="UP000694720">
    <property type="component" value="Unplaced"/>
</dbReference>
<dbReference type="Proteomes" id="UP000694722">
    <property type="component" value="Unplaced"/>
</dbReference>
<dbReference type="Proteomes" id="UP000694723">
    <property type="component" value="Unplaced"/>
</dbReference>
<dbReference type="Proteomes" id="UP000694724">
    <property type="component" value="Unplaced"/>
</dbReference>
<dbReference type="Proteomes" id="UP000694725">
    <property type="component" value="Unplaced"/>
</dbReference>
<dbReference type="Proteomes" id="UP000694726">
    <property type="component" value="Unplaced"/>
</dbReference>
<dbReference type="Proteomes" id="UP000694727">
    <property type="component" value="Unplaced"/>
</dbReference>
<dbReference type="Proteomes" id="UP000694728">
    <property type="component" value="Unplaced"/>
</dbReference>
<dbReference type="Bgee" id="ENSSSCG00000033740">
    <property type="expression patterns" value="Expressed in right lobe of liver and 4 other cell types or tissues"/>
</dbReference>
<dbReference type="GO" id="GO:0005615">
    <property type="term" value="C:extracellular space"/>
    <property type="evidence" value="ECO:0000250"/>
    <property type="project" value="AgBase"/>
</dbReference>
<dbReference type="GO" id="GO:0005179">
    <property type="term" value="F:hormone activity"/>
    <property type="evidence" value="ECO:0000314"/>
    <property type="project" value="BHF-UCL"/>
</dbReference>
<dbReference type="GO" id="GO:0042802">
    <property type="term" value="F:identical protein binding"/>
    <property type="evidence" value="ECO:0000353"/>
    <property type="project" value="IntAct"/>
</dbReference>
<dbReference type="GO" id="GO:0005158">
    <property type="term" value="F:insulin receptor binding"/>
    <property type="evidence" value="ECO:0007669"/>
    <property type="project" value="Ensembl"/>
</dbReference>
<dbReference type="GO" id="GO:0005159">
    <property type="term" value="F:insulin-like growth factor receptor binding"/>
    <property type="evidence" value="ECO:0000315"/>
    <property type="project" value="AgBase"/>
</dbReference>
<dbReference type="GO" id="GO:0002020">
    <property type="term" value="F:protease binding"/>
    <property type="evidence" value="ECO:0007669"/>
    <property type="project" value="Ensembl"/>
</dbReference>
<dbReference type="GO" id="GO:0006953">
    <property type="term" value="P:acute-phase response"/>
    <property type="evidence" value="ECO:0007669"/>
    <property type="project" value="Ensembl"/>
</dbReference>
<dbReference type="GO" id="GO:0046631">
    <property type="term" value="P:alpha-beta T cell activation"/>
    <property type="evidence" value="ECO:0007669"/>
    <property type="project" value="Ensembl"/>
</dbReference>
<dbReference type="GO" id="GO:0055089">
    <property type="term" value="P:fatty acid homeostasis"/>
    <property type="evidence" value="ECO:0007669"/>
    <property type="project" value="Ensembl"/>
</dbReference>
<dbReference type="GO" id="GO:0007186">
    <property type="term" value="P:G protein-coupled receptor signaling pathway"/>
    <property type="evidence" value="ECO:0007669"/>
    <property type="project" value="Ensembl"/>
</dbReference>
<dbReference type="GO" id="GO:0042593">
    <property type="term" value="P:glucose homeostasis"/>
    <property type="evidence" value="ECO:0000318"/>
    <property type="project" value="GO_Central"/>
</dbReference>
<dbReference type="GO" id="GO:0006006">
    <property type="term" value="P:glucose metabolic process"/>
    <property type="evidence" value="ECO:0007669"/>
    <property type="project" value="UniProtKB-KW"/>
</dbReference>
<dbReference type="GO" id="GO:0009101">
    <property type="term" value="P:glycoprotein biosynthetic process"/>
    <property type="evidence" value="ECO:0000315"/>
    <property type="project" value="AgBase"/>
</dbReference>
<dbReference type="GO" id="GO:0008286">
    <property type="term" value="P:insulin receptor signaling pathway"/>
    <property type="evidence" value="ECO:0000314"/>
    <property type="project" value="BHF-UCL"/>
</dbReference>
<dbReference type="GO" id="GO:0019249">
    <property type="term" value="P:lactate biosynthetic process"/>
    <property type="evidence" value="ECO:0000315"/>
    <property type="project" value="AgBase"/>
</dbReference>
<dbReference type="GO" id="GO:0008610">
    <property type="term" value="P:lipid biosynthetic process"/>
    <property type="evidence" value="ECO:0000315"/>
    <property type="project" value="AgBase"/>
</dbReference>
<dbReference type="GO" id="GO:0042158">
    <property type="term" value="P:lipoprotein biosynthetic process"/>
    <property type="evidence" value="ECO:0000315"/>
    <property type="project" value="AgBase"/>
</dbReference>
<dbReference type="GO" id="GO:0002674">
    <property type="term" value="P:negative regulation of acute inflammatory response"/>
    <property type="evidence" value="ECO:0007669"/>
    <property type="project" value="Ensembl"/>
</dbReference>
<dbReference type="GO" id="GO:0045922">
    <property type="term" value="P:negative regulation of fatty acid metabolic process"/>
    <property type="evidence" value="ECO:0007669"/>
    <property type="project" value="Ensembl"/>
</dbReference>
<dbReference type="GO" id="GO:2000252">
    <property type="term" value="P:negative regulation of feeding behavior"/>
    <property type="evidence" value="ECO:0007669"/>
    <property type="project" value="Ensembl"/>
</dbReference>
<dbReference type="GO" id="GO:0010629">
    <property type="term" value="P:negative regulation of gene expression"/>
    <property type="evidence" value="ECO:0007669"/>
    <property type="project" value="Ensembl"/>
</dbReference>
<dbReference type="GO" id="GO:0045721">
    <property type="term" value="P:negative regulation of gluconeogenesis"/>
    <property type="evidence" value="ECO:0000315"/>
    <property type="project" value="AgBase"/>
</dbReference>
<dbReference type="GO" id="GO:0045818">
    <property type="term" value="P:negative regulation of glycogen catabolic process"/>
    <property type="evidence" value="ECO:0007669"/>
    <property type="project" value="Ensembl"/>
</dbReference>
<dbReference type="GO" id="GO:0050995">
    <property type="term" value="P:negative regulation of lipid catabolic process"/>
    <property type="evidence" value="ECO:0007669"/>
    <property type="project" value="Ensembl"/>
</dbReference>
<dbReference type="GO" id="GO:0042177">
    <property type="term" value="P:negative regulation of protein catabolic process"/>
    <property type="evidence" value="ECO:0007669"/>
    <property type="project" value="Ensembl"/>
</dbReference>
<dbReference type="GO" id="GO:0050709">
    <property type="term" value="P:negative regulation of protein secretion"/>
    <property type="evidence" value="ECO:0007669"/>
    <property type="project" value="Ensembl"/>
</dbReference>
<dbReference type="GO" id="GO:1903427">
    <property type="term" value="P:negative regulation of reactive oxygen species biosynthetic process"/>
    <property type="evidence" value="ECO:0007669"/>
    <property type="project" value="Ensembl"/>
</dbReference>
<dbReference type="GO" id="GO:0060266">
    <property type="term" value="P:negative regulation of respiratory burst involved in inflammatory response"/>
    <property type="evidence" value="ECO:0007669"/>
    <property type="project" value="Ensembl"/>
</dbReference>
<dbReference type="GO" id="GO:1990535">
    <property type="term" value="P:neuron projection maintenance"/>
    <property type="evidence" value="ECO:0007669"/>
    <property type="project" value="Ensembl"/>
</dbReference>
<dbReference type="GO" id="GO:0038060">
    <property type="term" value="P:nitric oxide-cGMP-mediated signaling"/>
    <property type="evidence" value="ECO:0007669"/>
    <property type="project" value="Ensembl"/>
</dbReference>
<dbReference type="GO" id="GO:0043123">
    <property type="term" value="P:positive regulation of canonical NF-kappaB signal transduction"/>
    <property type="evidence" value="ECO:0007669"/>
    <property type="project" value="Ensembl"/>
</dbReference>
<dbReference type="GO" id="GO:0030335">
    <property type="term" value="P:positive regulation of cell migration"/>
    <property type="evidence" value="ECO:0000315"/>
    <property type="project" value="BHF-UCL"/>
</dbReference>
<dbReference type="GO" id="GO:0008284">
    <property type="term" value="P:positive regulation of cell population proliferation"/>
    <property type="evidence" value="ECO:0007669"/>
    <property type="project" value="Ensembl"/>
</dbReference>
<dbReference type="GO" id="GO:0001819">
    <property type="term" value="P:positive regulation of cytokine production"/>
    <property type="evidence" value="ECO:0007669"/>
    <property type="project" value="Ensembl"/>
</dbReference>
<dbReference type="GO" id="GO:0046326">
    <property type="term" value="P:positive regulation of D-glucose import"/>
    <property type="evidence" value="ECO:0007669"/>
    <property type="project" value="Ensembl"/>
</dbReference>
<dbReference type="GO" id="GO:1902952">
    <property type="term" value="P:positive regulation of dendritic spine maintenance"/>
    <property type="evidence" value="ECO:0007669"/>
    <property type="project" value="Ensembl"/>
</dbReference>
<dbReference type="GO" id="GO:0045740">
    <property type="term" value="P:positive regulation of DNA replication"/>
    <property type="evidence" value="ECO:0000314"/>
    <property type="project" value="BHF-UCL"/>
</dbReference>
<dbReference type="GO" id="GO:0045723">
    <property type="term" value="P:positive regulation of fatty acid biosynthetic process"/>
    <property type="evidence" value="ECO:0000314"/>
    <property type="project" value="CACAO"/>
</dbReference>
<dbReference type="GO" id="GO:0010907">
    <property type="term" value="P:positive regulation of glucose metabolic process"/>
    <property type="evidence" value="ECO:0000314"/>
    <property type="project" value="CACAO"/>
</dbReference>
<dbReference type="GO" id="GO:0045725">
    <property type="term" value="P:positive regulation of glycogen biosynthetic process"/>
    <property type="evidence" value="ECO:0007669"/>
    <property type="project" value="Ensembl"/>
</dbReference>
<dbReference type="GO" id="GO:0045821">
    <property type="term" value="P:positive regulation of glycolytic process"/>
    <property type="evidence" value="ECO:0007669"/>
    <property type="project" value="Ensembl"/>
</dbReference>
<dbReference type="GO" id="GO:0046628">
    <property type="term" value="P:positive regulation of insulin receptor signaling pathway"/>
    <property type="evidence" value="ECO:0000314"/>
    <property type="project" value="BHF-UCL"/>
</dbReference>
<dbReference type="GO" id="GO:0051006">
    <property type="term" value="P:positive regulation of lipoprotein lipase activity"/>
    <property type="evidence" value="ECO:0000314"/>
    <property type="project" value="CACAO"/>
</dbReference>
<dbReference type="GO" id="GO:0043410">
    <property type="term" value="P:positive regulation of MAPK cascade"/>
    <property type="evidence" value="ECO:0007669"/>
    <property type="project" value="Ensembl"/>
</dbReference>
<dbReference type="GO" id="GO:0045840">
    <property type="term" value="P:positive regulation of mitotic nuclear division"/>
    <property type="evidence" value="ECO:0007669"/>
    <property type="project" value="Ensembl"/>
</dbReference>
<dbReference type="GO" id="GO:0010750">
    <property type="term" value="P:positive regulation of nitric oxide mediated signal transduction"/>
    <property type="evidence" value="ECO:0007669"/>
    <property type="project" value="Ensembl"/>
</dbReference>
<dbReference type="GO" id="GO:0051897">
    <property type="term" value="P:positive regulation of phosphatidylinositol 3-kinase/protein kinase B signal transduction"/>
    <property type="evidence" value="ECO:0007669"/>
    <property type="project" value="Ensembl"/>
</dbReference>
<dbReference type="GO" id="GO:1900182">
    <property type="term" value="P:positive regulation of protein localization to nucleus"/>
    <property type="evidence" value="ECO:0007669"/>
    <property type="project" value="Ensembl"/>
</dbReference>
<dbReference type="GO" id="GO:0050714">
    <property type="term" value="P:positive regulation of protein secretion"/>
    <property type="evidence" value="ECO:0000318"/>
    <property type="project" value="GO_Central"/>
</dbReference>
<dbReference type="GO" id="GO:0060267">
    <property type="term" value="P:positive regulation of respiratory burst"/>
    <property type="evidence" value="ECO:0007669"/>
    <property type="project" value="Ensembl"/>
</dbReference>
<dbReference type="GO" id="GO:1903076">
    <property type="term" value="P:regulation of protein localization to plasma membrane"/>
    <property type="evidence" value="ECO:0007669"/>
    <property type="project" value="Ensembl"/>
</dbReference>
<dbReference type="GO" id="GO:1903576">
    <property type="term" value="P:response to L-arginine"/>
    <property type="evidence" value="ECO:0000250"/>
    <property type="project" value="AgBase"/>
</dbReference>
<dbReference type="GO" id="GO:0042311">
    <property type="term" value="P:vasodilation"/>
    <property type="evidence" value="ECO:0007669"/>
    <property type="project" value="Ensembl"/>
</dbReference>
<dbReference type="GO" id="GO:0042060">
    <property type="term" value="P:wound healing"/>
    <property type="evidence" value="ECO:0007669"/>
    <property type="project" value="Ensembl"/>
</dbReference>
<dbReference type="CDD" id="cd04367">
    <property type="entry name" value="IlGF_insulin_like"/>
    <property type="match status" value="1"/>
</dbReference>
<dbReference type="FunFam" id="1.10.100.10:FF:000003">
    <property type="entry name" value="Insulin"/>
    <property type="match status" value="1"/>
</dbReference>
<dbReference type="Gene3D" id="1.10.100.10">
    <property type="entry name" value="Insulin-like"/>
    <property type="match status" value="1"/>
</dbReference>
<dbReference type="InterPro" id="IPR004825">
    <property type="entry name" value="Insulin"/>
</dbReference>
<dbReference type="InterPro" id="IPR016179">
    <property type="entry name" value="Insulin-like"/>
</dbReference>
<dbReference type="InterPro" id="IPR036438">
    <property type="entry name" value="Insulin-like_sf"/>
</dbReference>
<dbReference type="InterPro" id="IPR022353">
    <property type="entry name" value="Insulin_CS"/>
</dbReference>
<dbReference type="InterPro" id="IPR022352">
    <property type="entry name" value="Insulin_family"/>
</dbReference>
<dbReference type="PANTHER" id="PTHR11454:SF9">
    <property type="entry name" value="INSULIN"/>
    <property type="match status" value="1"/>
</dbReference>
<dbReference type="PANTHER" id="PTHR11454">
    <property type="entry name" value="INSULIN/INSULIN GROWTH FACTOR"/>
    <property type="match status" value="1"/>
</dbReference>
<dbReference type="Pfam" id="PF00049">
    <property type="entry name" value="Insulin"/>
    <property type="match status" value="1"/>
</dbReference>
<dbReference type="PRINTS" id="PR00277">
    <property type="entry name" value="INSULIN"/>
</dbReference>
<dbReference type="PRINTS" id="PR00276">
    <property type="entry name" value="INSULINFAMLY"/>
</dbReference>
<dbReference type="SMART" id="SM00078">
    <property type="entry name" value="IlGF"/>
    <property type="match status" value="1"/>
</dbReference>
<dbReference type="SUPFAM" id="SSF56994">
    <property type="entry name" value="Insulin-like"/>
    <property type="match status" value="1"/>
</dbReference>
<dbReference type="PROSITE" id="PS00262">
    <property type="entry name" value="INSULIN"/>
    <property type="match status" value="1"/>
</dbReference>
<sequence>MALWTRLLPLLALLALWAPAPAQAFVNQHLCGSHLVEALYLVCGERGFFYTPKARREAENPQAGAVELGGGLGGLQALALEGPPQKRGIVEQCCTSICSLYQLENYCN</sequence>